<protein>
    <recommendedName>
        <fullName>High-affinity choline transporter 1</fullName>
    </recommendedName>
</protein>
<sequence>MADLLGIVAIVFFYVLILVVGIWAGRKSKSSKELESEAGAATEEVMLAGRNIGTLVGIFTMTATWVGGAYINGTAEALYNGGLLGCQAPVGYAISLVMGGLLFAKKMREEGYITMLDPFQHKYGQRIGGLMYVPALLGETFWTAAILSALGATLSVILGIDMNASVTLSACIAVFYTFTGGYYAVAYTDVVQLFCIFVGLWVCVPAAMVHDGAKDISRNAGDWIGEIGGFKETSLWIDCMLLLVFGGIPWQVYFQRVLSSKTAHGAQTLSFVAGVGCILMAIPPALIGAIARNTDWRMTDYSPWNNGTKVESIPPDKRNMVVPLVFQYLTPRWVAFIGLGAVSAAVMSSADSSVLSAASMFAHNIWKLTIRPHASEKEVIIVMRIAIICVGIMATIMALTIQSIYGLWYLCADLVYVILFPQLLCVVYMPRSNTYGSLAGYAVGLVLRLIGGEPLVSLPAFFHYPMYTDGVQYFPFRTTAMLSSMATIYIVSIQSEKLFKSGRLSPEWDVMGCVVNIPIDHVPLPSDVSFAVSSETLNMKAPNGTPAPVHPNQQPSDENTLLHPYSDQSYYSTNSN</sequence>
<gene>
    <name type="primary">cho-1</name>
    <name type="ORF">C48D1.3</name>
</gene>
<name>SC5A7_CAEEL</name>
<comment type="function">
    <text evidence="3">Imports choline from the extracellular space to the neuron with high affinity. Choline uptake is the rate-limiting step in acetylcholine synthesis. Sodium ion and chloride ion dependent.</text>
</comment>
<comment type="subcellular location">
    <subcellularLocation>
        <location evidence="4">Membrane</location>
        <topology evidence="4">Multi-pass membrane protein</topology>
    </subcellularLocation>
</comment>
<comment type="tissue specificity">
    <text evidence="3">Detected in the nervous system, including the nerve ring and cholinergic motor neurons of the ventral nerve cord.</text>
</comment>
<comment type="similarity">
    <text evidence="4">Belongs to the sodium:solute symporter (SSF) (TC 2.A.21) family.</text>
</comment>
<organism>
    <name type="scientific">Caenorhabditis elegans</name>
    <dbReference type="NCBI Taxonomy" id="6239"/>
    <lineage>
        <taxon>Eukaryota</taxon>
        <taxon>Metazoa</taxon>
        <taxon>Ecdysozoa</taxon>
        <taxon>Nematoda</taxon>
        <taxon>Chromadorea</taxon>
        <taxon>Rhabditida</taxon>
        <taxon>Rhabditina</taxon>
        <taxon>Rhabditomorpha</taxon>
        <taxon>Rhabditoidea</taxon>
        <taxon>Rhabditidae</taxon>
        <taxon>Peloderinae</taxon>
        <taxon>Caenorhabditis</taxon>
    </lineage>
</organism>
<keyword id="KW-0325">Glycoprotein</keyword>
<keyword id="KW-0406">Ion transport</keyword>
<keyword id="KW-0472">Membrane</keyword>
<keyword id="KW-0530">Neurotransmitter biosynthesis</keyword>
<keyword id="KW-1185">Reference proteome</keyword>
<keyword id="KW-0915">Sodium</keyword>
<keyword id="KW-0739">Sodium transport</keyword>
<keyword id="KW-0769">Symport</keyword>
<keyword id="KW-0812">Transmembrane</keyword>
<keyword id="KW-1133">Transmembrane helix</keyword>
<keyword id="KW-0813">Transport</keyword>
<accession>O02228</accession>
<accession>Q9NL58</accession>
<evidence type="ECO:0000255" key="1"/>
<evidence type="ECO:0000256" key="2">
    <source>
        <dbReference type="SAM" id="MobiDB-lite"/>
    </source>
</evidence>
<evidence type="ECO:0000269" key="3">
    <source>
    </source>
</evidence>
<evidence type="ECO:0000305" key="4"/>
<feature type="chain" id="PRO_0000105395" description="High-affinity choline transporter 1">
    <location>
        <begin position="1"/>
        <end position="576"/>
    </location>
</feature>
<feature type="transmembrane region" description="Helical" evidence="1">
    <location>
        <begin position="6"/>
        <end position="26"/>
    </location>
</feature>
<feature type="topological domain" description="Cytoplasmic" evidence="1">
    <location>
        <begin position="27"/>
        <end position="51"/>
    </location>
</feature>
<feature type="transmembrane region" description="Helical" evidence="1">
    <location>
        <begin position="52"/>
        <end position="72"/>
    </location>
</feature>
<feature type="topological domain" description="Extracellular" evidence="1">
    <location>
        <begin position="73"/>
        <end position="82"/>
    </location>
</feature>
<feature type="transmembrane region" description="Helical" evidence="1">
    <location>
        <begin position="83"/>
        <end position="103"/>
    </location>
</feature>
<feature type="topological domain" description="Cytoplasmic" evidence="1">
    <location>
        <begin position="104"/>
        <end position="126"/>
    </location>
</feature>
<feature type="transmembrane region" description="Helical" evidence="1">
    <location>
        <begin position="127"/>
        <end position="147"/>
    </location>
</feature>
<feature type="topological domain" description="Extracellular" evidence="1">
    <location>
        <begin position="148"/>
        <end position="165"/>
    </location>
</feature>
<feature type="transmembrane region" description="Helical" evidence="1">
    <location>
        <begin position="166"/>
        <end position="186"/>
    </location>
</feature>
<feature type="topological domain" description="Cytoplasmic" evidence="1">
    <location>
        <begin position="187"/>
        <end position="192"/>
    </location>
</feature>
<feature type="transmembrane region" description="Helical" evidence="1">
    <location>
        <begin position="193"/>
        <end position="213"/>
    </location>
</feature>
<feature type="topological domain" description="Extracellular" evidence="1">
    <location>
        <begin position="214"/>
        <end position="233"/>
    </location>
</feature>
<feature type="transmembrane region" description="Helical" evidence="1">
    <location>
        <begin position="234"/>
        <end position="254"/>
    </location>
</feature>
<feature type="topological domain" description="Cytoplasmic" evidence="1">
    <location>
        <begin position="255"/>
        <end position="270"/>
    </location>
</feature>
<feature type="transmembrane region" description="Helical" evidence="1">
    <location>
        <begin position="271"/>
        <end position="291"/>
    </location>
</feature>
<feature type="topological domain" description="Extracellular" evidence="1">
    <location>
        <begin position="292"/>
        <end position="319"/>
    </location>
</feature>
<feature type="transmembrane region" description="Helical" evidence="1">
    <location>
        <begin position="320"/>
        <end position="340"/>
    </location>
</feature>
<feature type="topological domain" description="Cytoplasmic" evidence="1">
    <location>
        <begin position="341"/>
        <end position="378"/>
    </location>
</feature>
<feature type="transmembrane region" description="Helical" evidence="1">
    <location>
        <begin position="379"/>
        <end position="399"/>
    </location>
</feature>
<feature type="topological domain" description="Extracellular" evidence="1">
    <location>
        <begin position="400"/>
        <end position="408"/>
    </location>
</feature>
<feature type="transmembrane region" description="Helical" evidence="1">
    <location>
        <begin position="409"/>
        <end position="429"/>
    </location>
</feature>
<feature type="topological domain" description="Cytoplasmic" evidence="1">
    <location>
        <begin position="430"/>
        <end position="437"/>
    </location>
</feature>
<feature type="transmembrane region" description="Helical" evidence="1">
    <location>
        <begin position="438"/>
        <end position="458"/>
    </location>
</feature>
<feature type="topological domain" description="Extracellular" evidence="1">
    <location>
        <begin position="459"/>
        <end position="478"/>
    </location>
</feature>
<feature type="transmembrane region" description="Helical" evidence="1">
    <location>
        <begin position="479"/>
        <end position="499"/>
    </location>
</feature>
<feature type="topological domain" description="Cytoplasmic" evidence="1">
    <location>
        <begin position="500"/>
        <end position="576"/>
    </location>
</feature>
<feature type="region of interest" description="Disordered" evidence="2">
    <location>
        <begin position="541"/>
        <end position="576"/>
    </location>
</feature>
<feature type="compositionally biased region" description="Polar residues" evidence="2">
    <location>
        <begin position="566"/>
        <end position="576"/>
    </location>
</feature>
<feature type="glycosylation site" description="N-linked (GlcNAc...) asparagine" evidence="1">
    <location>
        <position position="306"/>
    </location>
</feature>
<dbReference type="EMBL" id="AB030946">
    <property type="protein sequence ID" value="BAA90483.1"/>
    <property type="molecule type" value="mRNA"/>
</dbReference>
<dbReference type="EMBL" id="Z81049">
    <property type="protein sequence ID" value="CAB02847.2"/>
    <property type="molecule type" value="Genomic_DNA"/>
</dbReference>
<dbReference type="PIR" id="T20037">
    <property type="entry name" value="T20037"/>
</dbReference>
<dbReference type="RefSeq" id="NP_502539.1">
    <property type="nucleotide sequence ID" value="NM_070138.9"/>
</dbReference>
<dbReference type="SMR" id="O02228"/>
<dbReference type="FunCoup" id="O02228">
    <property type="interactions" value="31"/>
</dbReference>
<dbReference type="STRING" id="6239.C48D1.3.1"/>
<dbReference type="GlyCosmos" id="O02228">
    <property type="glycosylation" value="1 site, No reported glycans"/>
</dbReference>
<dbReference type="PaxDb" id="6239-C48D1.3"/>
<dbReference type="PeptideAtlas" id="O02228"/>
<dbReference type="EnsemblMetazoa" id="C48D1.3.1">
    <property type="protein sequence ID" value="C48D1.3.1"/>
    <property type="gene ID" value="WBGene00000501"/>
</dbReference>
<dbReference type="GeneID" id="178274"/>
<dbReference type="KEGG" id="cel:CELE_C48D1.3"/>
<dbReference type="UCSC" id="C48D1.3">
    <property type="organism name" value="c. elegans"/>
</dbReference>
<dbReference type="AGR" id="WB:WBGene00000501"/>
<dbReference type="CTD" id="178274"/>
<dbReference type="WormBase" id="C48D1.3">
    <property type="protein sequence ID" value="CE27109"/>
    <property type="gene ID" value="WBGene00000501"/>
    <property type="gene designation" value="cho-1"/>
</dbReference>
<dbReference type="eggNOG" id="KOG3761">
    <property type="taxonomic scope" value="Eukaryota"/>
</dbReference>
<dbReference type="GeneTree" id="ENSGT00940000168351"/>
<dbReference type="HOGENOM" id="CLU_018808_10_0_1"/>
<dbReference type="InParanoid" id="O02228"/>
<dbReference type="OMA" id="WKTKNTG"/>
<dbReference type="OrthoDB" id="546820at2759"/>
<dbReference type="PhylomeDB" id="O02228"/>
<dbReference type="Reactome" id="R-CEL-264642">
    <property type="pathway name" value="Acetylcholine Neurotransmitter Release Cycle"/>
</dbReference>
<dbReference type="Reactome" id="R-CEL-425366">
    <property type="pathway name" value="Transport of bile salts and organic acids, metal ions and amine compounds"/>
</dbReference>
<dbReference type="PRO" id="PR:O02228"/>
<dbReference type="Proteomes" id="UP000001940">
    <property type="component" value="Chromosome IV"/>
</dbReference>
<dbReference type="Bgee" id="WBGene00000501">
    <property type="expression patterns" value="Expressed in larva and 3 other cell types or tissues"/>
</dbReference>
<dbReference type="GO" id="GO:0030424">
    <property type="term" value="C:axon"/>
    <property type="evidence" value="ECO:0000314"/>
    <property type="project" value="WormBase"/>
</dbReference>
<dbReference type="GO" id="GO:0043005">
    <property type="term" value="C:neuron projection"/>
    <property type="evidence" value="ECO:0000314"/>
    <property type="project" value="WormBase"/>
</dbReference>
<dbReference type="GO" id="GO:0043025">
    <property type="term" value="C:neuronal cell body"/>
    <property type="evidence" value="ECO:0000314"/>
    <property type="project" value="WormBase"/>
</dbReference>
<dbReference type="GO" id="GO:0005886">
    <property type="term" value="C:plasma membrane"/>
    <property type="evidence" value="ECO:0000318"/>
    <property type="project" value="GO_Central"/>
</dbReference>
<dbReference type="GO" id="GO:0045202">
    <property type="term" value="C:synapse"/>
    <property type="evidence" value="ECO:0000314"/>
    <property type="project" value="WormBase"/>
</dbReference>
<dbReference type="GO" id="GO:0008021">
    <property type="term" value="C:synaptic vesicle"/>
    <property type="evidence" value="ECO:0000314"/>
    <property type="project" value="WormBase"/>
</dbReference>
<dbReference type="GO" id="GO:0015220">
    <property type="term" value="F:choline transmembrane transporter activity"/>
    <property type="evidence" value="ECO:0000314"/>
    <property type="project" value="WormBase"/>
</dbReference>
<dbReference type="GO" id="GO:0005307">
    <property type="term" value="F:choline:sodium symporter activity"/>
    <property type="evidence" value="ECO:0000318"/>
    <property type="project" value="GO_Central"/>
</dbReference>
<dbReference type="GO" id="GO:0008292">
    <property type="term" value="P:acetylcholine biosynthetic process"/>
    <property type="evidence" value="ECO:0000250"/>
    <property type="project" value="UniProtKB"/>
</dbReference>
<dbReference type="GO" id="GO:0015871">
    <property type="term" value="P:choline transport"/>
    <property type="evidence" value="ECO:0000314"/>
    <property type="project" value="WormBase"/>
</dbReference>
<dbReference type="CDD" id="cd11474">
    <property type="entry name" value="SLC5sbd_CHT"/>
    <property type="match status" value="1"/>
</dbReference>
<dbReference type="FunFam" id="1.20.1730.10:FF:000025">
    <property type="entry name" value="High-affinity choline transporter 1"/>
    <property type="match status" value="1"/>
</dbReference>
<dbReference type="Gene3D" id="1.20.1730.10">
    <property type="entry name" value="Sodium/glucose cotransporter"/>
    <property type="match status" value="1"/>
</dbReference>
<dbReference type="InterPro" id="IPR052244">
    <property type="entry name" value="Choline_transporter"/>
</dbReference>
<dbReference type="InterPro" id="IPR038377">
    <property type="entry name" value="Na/Glc_symporter_sf"/>
</dbReference>
<dbReference type="InterPro" id="IPR001734">
    <property type="entry name" value="Na/solute_symporter"/>
</dbReference>
<dbReference type="PANTHER" id="PTHR45897">
    <property type="entry name" value="HIGH-AFFINITY CHOLINE TRANSPORTER 1"/>
    <property type="match status" value="1"/>
</dbReference>
<dbReference type="PANTHER" id="PTHR45897:SF4">
    <property type="entry name" value="HIGH-AFFINITY CHOLINE TRANSPORTER 1"/>
    <property type="match status" value="1"/>
</dbReference>
<dbReference type="Pfam" id="PF00474">
    <property type="entry name" value="SSF"/>
    <property type="match status" value="1"/>
</dbReference>
<dbReference type="PROSITE" id="PS50283">
    <property type="entry name" value="NA_SOLUT_SYMP_3"/>
    <property type="match status" value="1"/>
</dbReference>
<reference key="1">
    <citation type="journal article" date="2000" name="Nat. Neurosci.">
        <title>Identification and characterization of the high-affinity choline transporter.</title>
        <authorList>
            <person name="Okuda T."/>
            <person name="Haga T."/>
            <person name="Kanai Y."/>
            <person name="Endou H."/>
            <person name="Ishihara T."/>
            <person name="Katsura I."/>
        </authorList>
    </citation>
    <scope>NUCLEOTIDE SEQUENCE [MRNA]</scope>
    <scope>FUNCTION</scope>
    <scope>TISSUE SPECIFICITY</scope>
    <source>
        <strain>Bristol N2</strain>
    </source>
</reference>
<reference key="2">
    <citation type="journal article" date="1998" name="Science">
        <title>Genome sequence of the nematode C. elegans: a platform for investigating biology.</title>
        <authorList>
            <consortium name="The C. elegans sequencing consortium"/>
        </authorList>
    </citation>
    <scope>NUCLEOTIDE SEQUENCE [LARGE SCALE GENOMIC DNA]</scope>
    <source>
        <strain>Bristol N2</strain>
    </source>
</reference>
<proteinExistence type="evidence at transcript level"/>